<evidence type="ECO:0000255" key="1">
    <source>
        <dbReference type="HAMAP-Rule" id="MF_01631"/>
    </source>
</evidence>
<comment type="function">
    <text evidence="1">Catalyzes the last two sequential reactions in the de novo biosynthetic pathway for UDP-N-acetylglucosamine (UDP-GlcNAc). The C-terminal domain catalyzes the transfer of acetyl group from acetyl coenzyme A to glucosamine-1-phosphate (GlcN-1-P) to produce N-acetylglucosamine-1-phosphate (GlcNAc-1-P), which is converted into UDP-GlcNAc by the transfer of uridine 5-monophosphate (from uridine 5-triphosphate), a reaction catalyzed by the N-terminal domain.</text>
</comment>
<comment type="catalytic activity">
    <reaction evidence="1">
        <text>alpha-D-glucosamine 1-phosphate + acetyl-CoA = N-acetyl-alpha-D-glucosamine 1-phosphate + CoA + H(+)</text>
        <dbReference type="Rhea" id="RHEA:13725"/>
        <dbReference type="ChEBI" id="CHEBI:15378"/>
        <dbReference type="ChEBI" id="CHEBI:57287"/>
        <dbReference type="ChEBI" id="CHEBI:57288"/>
        <dbReference type="ChEBI" id="CHEBI:57776"/>
        <dbReference type="ChEBI" id="CHEBI:58516"/>
        <dbReference type="EC" id="2.3.1.157"/>
    </reaction>
</comment>
<comment type="catalytic activity">
    <reaction evidence="1">
        <text>N-acetyl-alpha-D-glucosamine 1-phosphate + UTP + H(+) = UDP-N-acetyl-alpha-D-glucosamine + diphosphate</text>
        <dbReference type="Rhea" id="RHEA:13509"/>
        <dbReference type="ChEBI" id="CHEBI:15378"/>
        <dbReference type="ChEBI" id="CHEBI:33019"/>
        <dbReference type="ChEBI" id="CHEBI:46398"/>
        <dbReference type="ChEBI" id="CHEBI:57705"/>
        <dbReference type="ChEBI" id="CHEBI:57776"/>
        <dbReference type="EC" id="2.7.7.23"/>
    </reaction>
</comment>
<comment type="cofactor">
    <cofactor evidence="1">
        <name>Mg(2+)</name>
        <dbReference type="ChEBI" id="CHEBI:18420"/>
    </cofactor>
    <text evidence="1">Binds 1 Mg(2+) ion per subunit.</text>
</comment>
<comment type="pathway">
    <text evidence="1">Nucleotide-sugar biosynthesis; UDP-N-acetyl-alpha-D-glucosamine biosynthesis; N-acetyl-alpha-D-glucosamine 1-phosphate from alpha-D-glucosamine 6-phosphate (route II): step 2/2.</text>
</comment>
<comment type="pathway">
    <text evidence="1">Nucleotide-sugar biosynthesis; UDP-N-acetyl-alpha-D-glucosamine biosynthesis; UDP-N-acetyl-alpha-D-glucosamine from N-acetyl-alpha-D-glucosamine 1-phosphate: step 1/1.</text>
</comment>
<comment type="pathway">
    <text evidence="1">Bacterial outer membrane biogenesis; LPS lipid A biosynthesis.</text>
</comment>
<comment type="subunit">
    <text evidence="1">Homotrimer.</text>
</comment>
<comment type="subcellular location">
    <subcellularLocation>
        <location evidence="1">Cytoplasm</location>
    </subcellularLocation>
</comment>
<comment type="similarity">
    <text evidence="1">In the N-terminal section; belongs to the N-acetylglucosamine-1-phosphate uridyltransferase family.</text>
</comment>
<comment type="similarity">
    <text evidence="1">In the C-terminal section; belongs to the transferase hexapeptide repeat family.</text>
</comment>
<keyword id="KW-0012">Acyltransferase</keyword>
<keyword id="KW-0133">Cell shape</keyword>
<keyword id="KW-0961">Cell wall biogenesis/degradation</keyword>
<keyword id="KW-0963">Cytoplasm</keyword>
<keyword id="KW-0460">Magnesium</keyword>
<keyword id="KW-0479">Metal-binding</keyword>
<keyword id="KW-0511">Multifunctional enzyme</keyword>
<keyword id="KW-0548">Nucleotidyltransferase</keyword>
<keyword id="KW-0573">Peptidoglycan synthesis</keyword>
<keyword id="KW-0677">Repeat</keyword>
<keyword id="KW-0808">Transferase</keyword>
<proteinExistence type="inferred from homology"/>
<feature type="chain" id="PRO_0000233786" description="Bifunctional protein GlmU">
    <location>
        <begin position="1"/>
        <end position="461"/>
    </location>
</feature>
<feature type="region of interest" description="Pyrophosphorylase" evidence="1">
    <location>
        <begin position="1"/>
        <end position="229"/>
    </location>
</feature>
<feature type="region of interest" description="Linker" evidence="1">
    <location>
        <begin position="230"/>
        <end position="250"/>
    </location>
</feature>
<feature type="region of interest" description="N-acetyltransferase" evidence="1">
    <location>
        <begin position="251"/>
        <end position="461"/>
    </location>
</feature>
<feature type="active site" description="Proton acceptor" evidence="1">
    <location>
        <position position="362"/>
    </location>
</feature>
<feature type="binding site" evidence="1">
    <location>
        <begin position="8"/>
        <end position="11"/>
    </location>
    <ligand>
        <name>UDP-N-acetyl-alpha-D-glucosamine</name>
        <dbReference type="ChEBI" id="CHEBI:57705"/>
    </ligand>
</feature>
<feature type="binding site" evidence="1">
    <location>
        <position position="22"/>
    </location>
    <ligand>
        <name>UDP-N-acetyl-alpha-D-glucosamine</name>
        <dbReference type="ChEBI" id="CHEBI:57705"/>
    </ligand>
</feature>
<feature type="binding site" evidence="1">
    <location>
        <position position="72"/>
    </location>
    <ligand>
        <name>UDP-N-acetyl-alpha-D-glucosamine</name>
        <dbReference type="ChEBI" id="CHEBI:57705"/>
    </ligand>
</feature>
<feature type="binding site" evidence="1">
    <location>
        <begin position="77"/>
        <end position="78"/>
    </location>
    <ligand>
        <name>UDP-N-acetyl-alpha-D-glucosamine</name>
        <dbReference type="ChEBI" id="CHEBI:57705"/>
    </ligand>
</feature>
<feature type="binding site" evidence="1">
    <location>
        <position position="102"/>
    </location>
    <ligand>
        <name>Mg(2+)</name>
        <dbReference type="ChEBI" id="CHEBI:18420"/>
    </ligand>
</feature>
<feature type="binding site" evidence="1">
    <location>
        <position position="139"/>
    </location>
    <ligand>
        <name>UDP-N-acetyl-alpha-D-glucosamine</name>
        <dbReference type="ChEBI" id="CHEBI:57705"/>
    </ligand>
</feature>
<feature type="binding site" evidence="1">
    <location>
        <position position="154"/>
    </location>
    <ligand>
        <name>UDP-N-acetyl-alpha-D-glucosamine</name>
        <dbReference type="ChEBI" id="CHEBI:57705"/>
    </ligand>
</feature>
<feature type="binding site" evidence="1">
    <location>
        <position position="169"/>
    </location>
    <ligand>
        <name>UDP-N-acetyl-alpha-D-glucosamine</name>
        <dbReference type="ChEBI" id="CHEBI:57705"/>
    </ligand>
</feature>
<feature type="binding site" evidence="1">
    <location>
        <position position="227"/>
    </location>
    <ligand>
        <name>Mg(2+)</name>
        <dbReference type="ChEBI" id="CHEBI:18420"/>
    </ligand>
</feature>
<feature type="binding site" evidence="1">
    <location>
        <position position="227"/>
    </location>
    <ligand>
        <name>UDP-N-acetyl-alpha-D-glucosamine</name>
        <dbReference type="ChEBI" id="CHEBI:57705"/>
    </ligand>
</feature>
<feature type="binding site" evidence="1">
    <location>
        <position position="332"/>
    </location>
    <ligand>
        <name>UDP-N-acetyl-alpha-D-glucosamine</name>
        <dbReference type="ChEBI" id="CHEBI:57705"/>
    </ligand>
</feature>
<feature type="binding site" evidence="1">
    <location>
        <position position="350"/>
    </location>
    <ligand>
        <name>UDP-N-acetyl-alpha-D-glucosamine</name>
        <dbReference type="ChEBI" id="CHEBI:57705"/>
    </ligand>
</feature>
<feature type="binding site" evidence="1">
    <location>
        <position position="365"/>
    </location>
    <ligand>
        <name>UDP-N-acetyl-alpha-D-glucosamine</name>
        <dbReference type="ChEBI" id="CHEBI:57705"/>
    </ligand>
</feature>
<feature type="binding site" evidence="1">
    <location>
        <position position="376"/>
    </location>
    <ligand>
        <name>UDP-N-acetyl-alpha-D-glucosamine</name>
        <dbReference type="ChEBI" id="CHEBI:57705"/>
    </ligand>
</feature>
<feature type="binding site" evidence="1">
    <location>
        <begin position="385"/>
        <end position="386"/>
    </location>
    <ligand>
        <name>acetyl-CoA</name>
        <dbReference type="ChEBI" id="CHEBI:57288"/>
    </ligand>
</feature>
<feature type="binding site" evidence="1">
    <location>
        <position position="422"/>
    </location>
    <ligand>
        <name>acetyl-CoA</name>
        <dbReference type="ChEBI" id="CHEBI:57288"/>
    </ligand>
</feature>
<feature type="binding site" evidence="1">
    <location>
        <position position="439"/>
    </location>
    <ligand>
        <name>acetyl-CoA</name>
        <dbReference type="ChEBI" id="CHEBI:57288"/>
    </ligand>
</feature>
<protein>
    <recommendedName>
        <fullName evidence="1">Bifunctional protein GlmU</fullName>
    </recommendedName>
    <domain>
        <recommendedName>
            <fullName evidence="1">UDP-N-acetylglucosamine pyrophosphorylase</fullName>
            <ecNumber evidence="1">2.7.7.23</ecNumber>
        </recommendedName>
        <alternativeName>
            <fullName evidence="1">N-acetylglucosamine-1-phosphate uridyltransferase</fullName>
        </alternativeName>
    </domain>
    <domain>
        <recommendedName>
            <fullName evidence="1">Glucosamine-1-phosphate N-acetyltransferase</fullName>
            <ecNumber evidence="1">2.3.1.157</ecNumber>
        </recommendedName>
    </domain>
</protein>
<organism>
    <name type="scientific">Lactobacillus johnsonii (strain CNCM I-12250 / La1 / NCC 533)</name>
    <dbReference type="NCBI Taxonomy" id="257314"/>
    <lineage>
        <taxon>Bacteria</taxon>
        <taxon>Bacillati</taxon>
        <taxon>Bacillota</taxon>
        <taxon>Bacilli</taxon>
        <taxon>Lactobacillales</taxon>
        <taxon>Lactobacillaceae</taxon>
        <taxon>Lactobacillus</taxon>
    </lineage>
</organism>
<sequence length="461" mass="50198">MNKYVVILAAGKGTRMKSKLYKVLHKVCGKTMVEHVVEAAKGTNPDKIITVVGNGAESVKDVLAGQSEFAFQEKQLGTGDAVLAANDLLENLEGSTLVATGDTPLFTAETFNNLFKKHEESGNSATVLTAKAPNPFGYGRIIRDEDGNVLRIVEQKDGTPEELAVDEINTGVFCFDNKELFKALKQVGNDNAQGEYYLTDVLEIMRKAGHKVGAYEMPDFSESLGVNDRIALAQATKIMQRRINEEHMRNGVSFIDPDTAYIDSDVKIGNDTVIEGNVVIKGKTEIGSNCYITNSSRIIDSKIGNNVTITSSTLQEAQMDDNTDIGPNSHLRPKAVIRKGAHIGNFVEIKKAEIGENTKVGHLTYVGDATLGKDINIGCGTIFSNYDGVKKFHTNVGDHSFIGAGATIIAPVNIADHAFVAADSTITKDVEKYDMAIARGRQTNKPDYWHKLPLAKDKEWE</sequence>
<gene>
    <name evidence="1" type="primary">glmU</name>
    <name type="ordered locus">LJ_0208</name>
</gene>
<dbReference type="EC" id="2.7.7.23" evidence="1"/>
<dbReference type="EC" id="2.3.1.157" evidence="1"/>
<dbReference type="EMBL" id="AE017198">
    <property type="protein sequence ID" value="AAS08190.1"/>
    <property type="molecule type" value="Genomic_DNA"/>
</dbReference>
<dbReference type="RefSeq" id="WP_004898713.1">
    <property type="nucleotide sequence ID" value="NC_005362.1"/>
</dbReference>
<dbReference type="SMR" id="Q74LH7"/>
<dbReference type="GeneID" id="83569667"/>
<dbReference type="KEGG" id="ljo:LJ_0208"/>
<dbReference type="eggNOG" id="COG1207">
    <property type="taxonomic scope" value="Bacteria"/>
</dbReference>
<dbReference type="HOGENOM" id="CLU_029499_15_2_9"/>
<dbReference type="UniPathway" id="UPA00113">
    <property type="reaction ID" value="UER00532"/>
</dbReference>
<dbReference type="UniPathway" id="UPA00113">
    <property type="reaction ID" value="UER00533"/>
</dbReference>
<dbReference type="UniPathway" id="UPA00973"/>
<dbReference type="Proteomes" id="UP000000581">
    <property type="component" value="Chromosome"/>
</dbReference>
<dbReference type="GO" id="GO:0005737">
    <property type="term" value="C:cytoplasm"/>
    <property type="evidence" value="ECO:0007669"/>
    <property type="project" value="UniProtKB-SubCell"/>
</dbReference>
<dbReference type="GO" id="GO:0016020">
    <property type="term" value="C:membrane"/>
    <property type="evidence" value="ECO:0007669"/>
    <property type="project" value="GOC"/>
</dbReference>
<dbReference type="GO" id="GO:0019134">
    <property type="term" value="F:glucosamine-1-phosphate N-acetyltransferase activity"/>
    <property type="evidence" value="ECO:0007669"/>
    <property type="project" value="UniProtKB-UniRule"/>
</dbReference>
<dbReference type="GO" id="GO:0000287">
    <property type="term" value="F:magnesium ion binding"/>
    <property type="evidence" value="ECO:0007669"/>
    <property type="project" value="UniProtKB-UniRule"/>
</dbReference>
<dbReference type="GO" id="GO:0003977">
    <property type="term" value="F:UDP-N-acetylglucosamine diphosphorylase activity"/>
    <property type="evidence" value="ECO:0007669"/>
    <property type="project" value="UniProtKB-UniRule"/>
</dbReference>
<dbReference type="GO" id="GO:0000902">
    <property type="term" value="P:cell morphogenesis"/>
    <property type="evidence" value="ECO:0007669"/>
    <property type="project" value="UniProtKB-UniRule"/>
</dbReference>
<dbReference type="GO" id="GO:0071555">
    <property type="term" value="P:cell wall organization"/>
    <property type="evidence" value="ECO:0007669"/>
    <property type="project" value="UniProtKB-KW"/>
</dbReference>
<dbReference type="GO" id="GO:0009245">
    <property type="term" value="P:lipid A biosynthetic process"/>
    <property type="evidence" value="ECO:0007669"/>
    <property type="project" value="UniProtKB-UniRule"/>
</dbReference>
<dbReference type="GO" id="GO:0009252">
    <property type="term" value="P:peptidoglycan biosynthetic process"/>
    <property type="evidence" value="ECO:0007669"/>
    <property type="project" value="UniProtKB-UniRule"/>
</dbReference>
<dbReference type="GO" id="GO:0008360">
    <property type="term" value="P:regulation of cell shape"/>
    <property type="evidence" value="ECO:0007669"/>
    <property type="project" value="UniProtKB-KW"/>
</dbReference>
<dbReference type="GO" id="GO:0006048">
    <property type="term" value="P:UDP-N-acetylglucosamine biosynthetic process"/>
    <property type="evidence" value="ECO:0007669"/>
    <property type="project" value="UniProtKB-UniPathway"/>
</dbReference>
<dbReference type="CDD" id="cd02540">
    <property type="entry name" value="GT2_GlmU_N_bac"/>
    <property type="match status" value="1"/>
</dbReference>
<dbReference type="CDD" id="cd03353">
    <property type="entry name" value="LbH_GlmU_C"/>
    <property type="match status" value="1"/>
</dbReference>
<dbReference type="Gene3D" id="2.160.10.10">
    <property type="entry name" value="Hexapeptide repeat proteins"/>
    <property type="match status" value="1"/>
</dbReference>
<dbReference type="Gene3D" id="3.90.550.10">
    <property type="entry name" value="Spore Coat Polysaccharide Biosynthesis Protein SpsA, Chain A"/>
    <property type="match status" value="1"/>
</dbReference>
<dbReference type="HAMAP" id="MF_01631">
    <property type="entry name" value="GlmU"/>
    <property type="match status" value="1"/>
</dbReference>
<dbReference type="InterPro" id="IPR005882">
    <property type="entry name" value="Bifunctional_GlmU"/>
</dbReference>
<dbReference type="InterPro" id="IPR050065">
    <property type="entry name" value="GlmU-like"/>
</dbReference>
<dbReference type="InterPro" id="IPR038009">
    <property type="entry name" value="GlmU_C_LbH"/>
</dbReference>
<dbReference type="InterPro" id="IPR001451">
    <property type="entry name" value="Hexapep"/>
</dbReference>
<dbReference type="InterPro" id="IPR018357">
    <property type="entry name" value="Hexapep_transf_CS"/>
</dbReference>
<dbReference type="InterPro" id="IPR005835">
    <property type="entry name" value="NTP_transferase_dom"/>
</dbReference>
<dbReference type="InterPro" id="IPR029044">
    <property type="entry name" value="Nucleotide-diphossugar_trans"/>
</dbReference>
<dbReference type="InterPro" id="IPR011004">
    <property type="entry name" value="Trimer_LpxA-like_sf"/>
</dbReference>
<dbReference type="NCBIfam" id="TIGR01173">
    <property type="entry name" value="glmU"/>
    <property type="match status" value="1"/>
</dbReference>
<dbReference type="NCBIfam" id="NF010934">
    <property type="entry name" value="PRK14354.1"/>
    <property type="match status" value="1"/>
</dbReference>
<dbReference type="PANTHER" id="PTHR43584:SF3">
    <property type="entry name" value="BIFUNCTIONAL PROTEIN GLMU"/>
    <property type="match status" value="1"/>
</dbReference>
<dbReference type="PANTHER" id="PTHR43584">
    <property type="entry name" value="NUCLEOTIDYL TRANSFERASE"/>
    <property type="match status" value="1"/>
</dbReference>
<dbReference type="Pfam" id="PF00132">
    <property type="entry name" value="Hexapep"/>
    <property type="match status" value="1"/>
</dbReference>
<dbReference type="Pfam" id="PF00483">
    <property type="entry name" value="NTP_transferase"/>
    <property type="match status" value="1"/>
</dbReference>
<dbReference type="SUPFAM" id="SSF53448">
    <property type="entry name" value="Nucleotide-diphospho-sugar transferases"/>
    <property type="match status" value="1"/>
</dbReference>
<dbReference type="SUPFAM" id="SSF51161">
    <property type="entry name" value="Trimeric LpxA-like enzymes"/>
    <property type="match status" value="1"/>
</dbReference>
<dbReference type="PROSITE" id="PS00101">
    <property type="entry name" value="HEXAPEP_TRANSFERASES"/>
    <property type="match status" value="1"/>
</dbReference>
<name>GLMU_LACJO</name>
<reference key="1">
    <citation type="journal article" date="2004" name="Proc. Natl. Acad. Sci. U.S.A.">
        <title>The genome sequence of the probiotic intestinal bacterium Lactobacillus johnsonii NCC 533.</title>
        <authorList>
            <person name="Pridmore R.D."/>
            <person name="Berger B."/>
            <person name="Desiere F."/>
            <person name="Vilanova D."/>
            <person name="Barretto C."/>
            <person name="Pittet A.-C."/>
            <person name="Zwahlen M.-C."/>
            <person name="Rouvet M."/>
            <person name="Altermann E."/>
            <person name="Barrangou R."/>
            <person name="Mollet B."/>
            <person name="Mercenier A."/>
            <person name="Klaenhammer T."/>
            <person name="Arigoni F."/>
            <person name="Schell M.A."/>
        </authorList>
    </citation>
    <scope>NUCLEOTIDE SEQUENCE [LARGE SCALE GENOMIC DNA]</scope>
    <source>
        <strain>CNCM I-1225 / La1 / NCC 533</strain>
    </source>
</reference>
<accession>Q74LH7</accession>